<feature type="chain" id="PRO_1000065792" description="Sigma factor-binding protein Crl">
    <location>
        <begin position="1"/>
        <end position="133"/>
    </location>
</feature>
<feature type="region of interest" description="Essential for activity" evidence="1">
    <location>
        <begin position="99"/>
        <end position="122"/>
    </location>
</feature>
<comment type="function">
    <text evidence="1">Binds to the sigma-S subunit of RNA polymerase, activating expression of sigma-S-regulated genes. Stimulates RNA polymerase holoenzyme formation and may bind to several other sigma factors, such as sigma-70 and sigma-32.</text>
</comment>
<comment type="subcellular location">
    <subcellularLocation>
        <location evidence="1">Cytoplasm</location>
    </subcellularLocation>
</comment>
<comment type="similarity">
    <text evidence="1">Belongs to the Crl family.</text>
</comment>
<proteinExistence type="inferred from homology"/>
<gene>
    <name evidence="1" type="primary">crl</name>
    <name type="ordered locus">YPDSF_2852</name>
</gene>
<protein>
    <recommendedName>
        <fullName evidence="1">Sigma factor-binding protein Crl</fullName>
    </recommendedName>
</protein>
<organism>
    <name type="scientific">Yersinia pestis (strain Pestoides F)</name>
    <dbReference type="NCBI Taxonomy" id="386656"/>
    <lineage>
        <taxon>Bacteria</taxon>
        <taxon>Pseudomonadati</taxon>
        <taxon>Pseudomonadota</taxon>
        <taxon>Gammaproteobacteria</taxon>
        <taxon>Enterobacterales</taxon>
        <taxon>Yersiniaceae</taxon>
        <taxon>Yersinia</taxon>
    </lineage>
</organism>
<dbReference type="EMBL" id="CP000668">
    <property type="protein sequence ID" value="ABP41214.1"/>
    <property type="molecule type" value="Genomic_DNA"/>
</dbReference>
<dbReference type="RefSeq" id="WP_011906387.1">
    <property type="nucleotide sequence ID" value="NZ_CP009715.1"/>
</dbReference>
<dbReference type="SMR" id="A4TPK2"/>
<dbReference type="KEGG" id="ypp:YPDSF_2852"/>
<dbReference type="PATRIC" id="fig|386656.14.peg.114"/>
<dbReference type="GO" id="GO:0005737">
    <property type="term" value="C:cytoplasm"/>
    <property type="evidence" value="ECO:0007669"/>
    <property type="project" value="UniProtKB-SubCell"/>
</dbReference>
<dbReference type="GO" id="GO:0045893">
    <property type="term" value="P:positive regulation of DNA-templated transcription"/>
    <property type="evidence" value="ECO:0007669"/>
    <property type="project" value="UniProtKB-UniRule"/>
</dbReference>
<dbReference type="Gene3D" id="3.30.310.230">
    <property type="entry name" value="Sigma factor-binding protein Crl monomer"/>
    <property type="match status" value="1"/>
</dbReference>
<dbReference type="HAMAP" id="MF_01178">
    <property type="entry name" value="Crl"/>
    <property type="match status" value="1"/>
</dbReference>
<dbReference type="InterPro" id="IPR009986">
    <property type="entry name" value="Tscrpt_reg_Crl"/>
</dbReference>
<dbReference type="InterPro" id="IPR038208">
    <property type="entry name" value="Tscrpt_reg_Crl_sf"/>
</dbReference>
<dbReference type="NCBIfam" id="NF008217">
    <property type="entry name" value="PRK10984.1"/>
    <property type="match status" value="1"/>
</dbReference>
<dbReference type="Pfam" id="PF07417">
    <property type="entry name" value="Crl"/>
    <property type="match status" value="1"/>
</dbReference>
<reference key="1">
    <citation type="submission" date="2007-02" db="EMBL/GenBank/DDBJ databases">
        <title>Complete sequence of chromosome of Yersinia pestis Pestoides F.</title>
        <authorList>
            <consortium name="US DOE Joint Genome Institute"/>
            <person name="Copeland A."/>
            <person name="Lucas S."/>
            <person name="Lapidus A."/>
            <person name="Barry K."/>
            <person name="Detter J.C."/>
            <person name="Glavina del Rio T."/>
            <person name="Hammon N."/>
            <person name="Israni S."/>
            <person name="Dalin E."/>
            <person name="Tice H."/>
            <person name="Pitluck S."/>
            <person name="Di Bartolo G."/>
            <person name="Chain P."/>
            <person name="Malfatti S."/>
            <person name="Shin M."/>
            <person name="Vergez L."/>
            <person name="Schmutz J."/>
            <person name="Larimer F."/>
            <person name="Land M."/>
            <person name="Hauser L."/>
            <person name="Worsham P."/>
            <person name="Chu M."/>
            <person name="Bearden S."/>
            <person name="Garcia E."/>
            <person name="Richardson P."/>
        </authorList>
    </citation>
    <scope>NUCLEOTIDE SEQUENCE [LARGE SCALE GENOMIC DNA]</scope>
    <source>
        <strain>Pestoides F</strain>
    </source>
</reference>
<accession>A4TPK2</accession>
<keyword id="KW-0010">Activator</keyword>
<keyword id="KW-0963">Cytoplasm</keyword>
<keyword id="KW-0804">Transcription</keyword>
<keyword id="KW-0805">Transcription regulation</keyword>
<evidence type="ECO:0000255" key="1">
    <source>
        <dbReference type="HAMAP-Rule" id="MF_01178"/>
    </source>
</evidence>
<name>CRL_YERPP</name>
<sequence>MTLTSAHPKSKLMKRFAALGPYLREGQCQNDHFFFDCLAVCINVKLAPEKREFWGGWIELEPSAGRFTYVYQLGLFNKEGNWNAEKISDPEVQDKLESTLRSFHLRLEEMLASIDMKLEPAADFNDQPVKLSA</sequence>